<evidence type="ECO:0000255" key="1">
    <source>
        <dbReference type="HAMAP-Rule" id="MF_03123"/>
    </source>
</evidence>
<evidence type="ECO:0000255" key="2">
    <source>
        <dbReference type="PROSITE-ProRule" id="PRU01266"/>
    </source>
</evidence>
<evidence type="ECO:0000256" key="3">
    <source>
        <dbReference type="SAM" id="MobiDB-lite"/>
    </source>
</evidence>
<reference key="1">
    <citation type="journal article" date="2007" name="Nat. Biotechnol.">
        <title>Genome sequencing and analysis of the versatile cell factory Aspergillus niger CBS 513.88.</title>
        <authorList>
            <person name="Pel H.J."/>
            <person name="de Winde J.H."/>
            <person name="Archer D.B."/>
            <person name="Dyer P.S."/>
            <person name="Hofmann G."/>
            <person name="Schaap P.J."/>
            <person name="Turner G."/>
            <person name="de Vries R.P."/>
            <person name="Albang R."/>
            <person name="Albermann K."/>
            <person name="Andersen M.R."/>
            <person name="Bendtsen J.D."/>
            <person name="Benen J.A.E."/>
            <person name="van den Berg M."/>
            <person name="Breestraat S."/>
            <person name="Caddick M.X."/>
            <person name="Contreras R."/>
            <person name="Cornell M."/>
            <person name="Coutinho P.M."/>
            <person name="Danchin E.G.J."/>
            <person name="Debets A.J.M."/>
            <person name="Dekker P."/>
            <person name="van Dijck P.W.M."/>
            <person name="van Dijk A."/>
            <person name="Dijkhuizen L."/>
            <person name="Driessen A.J.M."/>
            <person name="d'Enfert C."/>
            <person name="Geysens S."/>
            <person name="Goosen C."/>
            <person name="Groot G.S.P."/>
            <person name="de Groot P.W.J."/>
            <person name="Guillemette T."/>
            <person name="Henrissat B."/>
            <person name="Herweijer M."/>
            <person name="van den Hombergh J.P.T.W."/>
            <person name="van den Hondel C.A.M.J.J."/>
            <person name="van der Heijden R.T.J.M."/>
            <person name="van der Kaaij R.M."/>
            <person name="Klis F.M."/>
            <person name="Kools H.J."/>
            <person name="Kubicek C.P."/>
            <person name="van Kuyk P.A."/>
            <person name="Lauber J."/>
            <person name="Lu X."/>
            <person name="van der Maarel M.J.E.C."/>
            <person name="Meulenberg R."/>
            <person name="Menke H."/>
            <person name="Mortimer M.A."/>
            <person name="Nielsen J."/>
            <person name="Oliver S.G."/>
            <person name="Olsthoorn M."/>
            <person name="Pal K."/>
            <person name="van Peij N.N.M.E."/>
            <person name="Ram A.F.J."/>
            <person name="Rinas U."/>
            <person name="Roubos J.A."/>
            <person name="Sagt C.M.J."/>
            <person name="Schmoll M."/>
            <person name="Sun J."/>
            <person name="Ussery D."/>
            <person name="Varga J."/>
            <person name="Vervecken W."/>
            <person name="van de Vondervoort P.J.J."/>
            <person name="Wedler H."/>
            <person name="Woesten H.A.B."/>
            <person name="Zeng A.-P."/>
            <person name="van Ooyen A.J.J."/>
            <person name="Visser J."/>
            <person name="Stam H."/>
        </authorList>
    </citation>
    <scope>NUCLEOTIDE SEQUENCE [LARGE SCALE GENOMIC DNA]</scope>
    <source>
        <strain>ATCC MYA-4892 / CBS 513.88 / FGSC A1513</strain>
    </source>
</reference>
<accession>A5ABM5</accession>
<feature type="transit peptide" description="Mitochondrion" evidence="1">
    <location>
        <begin position="1"/>
        <end position="33"/>
    </location>
</feature>
<feature type="chain" id="PRO_0000398255" description="Lipoyl synthase, mitochondrial">
    <location>
        <begin position="34"/>
        <end position="416"/>
    </location>
</feature>
<feature type="domain" description="Radical SAM core" evidence="2">
    <location>
        <begin position="147"/>
        <end position="368"/>
    </location>
</feature>
<feature type="region of interest" description="Disordered" evidence="3">
    <location>
        <begin position="20"/>
        <end position="52"/>
    </location>
</feature>
<feature type="compositionally biased region" description="Low complexity" evidence="3">
    <location>
        <begin position="29"/>
        <end position="46"/>
    </location>
</feature>
<feature type="binding site" evidence="1">
    <location>
        <position position="133"/>
    </location>
    <ligand>
        <name>[4Fe-4S] cluster</name>
        <dbReference type="ChEBI" id="CHEBI:49883"/>
        <label>1</label>
    </ligand>
</feature>
<feature type="binding site" evidence="1">
    <location>
        <position position="138"/>
    </location>
    <ligand>
        <name>[4Fe-4S] cluster</name>
        <dbReference type="ChEBI" id="CHEBI:49883"/>
        <label>1</label>
    </ligand>
</feature>
<feature type="binding site" evidence="1">
    <location>
        <position position="144"/>
    </location>
    <ligand>
        <name>[4Fe-4S] cluster</name>
        <dbReference type="ChEBI" id="CHEBI:49883"/>
        <label>1</label>
    </ligand>
</feature>
<feature type="binding site" evidence="1">
    <location>
        <position position="164"/>
    </location>
    <ligand>
        <name>[4Fe-4S] cluster</name>
        <dbReference type="ChEBI" id="CHEBI:49883"/>
        <label>2</label>
        <note>4Fe-4S-S-AdoMet</note>
    </ligand>
</feature>
<feature type="binding site" evidence="1">
    <location>
        <position position="168"/>
    </location>
    <ligand>
        <name>[4Fe-4S] cluster</name>
        <dbReference type="ChEBI" id="CHEBI:49883"/>
        <label>2</label>
        <note>4Fe-4S-S-AdoMet</note>
    </ligand>
</feature>
<feature type="binding site" evidence="1">
    <location>
        <position position="171"/>
    </location>
    <ligand>
        <name>[4Fe-4S] cluster</name>
        <dbReference type="ChEBI" id="CHEBI:49883"/>
        <label>2</label>
        <note>4Fe-4S-S-AdoMet</note>
    </ligand>
</feature>
<feature type="binding site" evidence="1">
    <location>
        <position position="379"/>
    </location>
    <ligand>
        <name>[4Fe-4S] cluster</name>
        <dbReference type="ChEBI" id="CHEBI:49883"/>
        <label>1</label>
    </ligand>
</feature>
<protein>
    <recommendedName>
        <fullName evidence="1">Lipoyl synthase, mitochondrial</fullName>
        <ecNumber evidence="1">2.8.1.8</ecNumber>
    </recommendedName>
    <alternativeName>
        <fullName evidence="1">Lipoate synthase</fullName>
        <shortName evidence="1">LS</shortName>
        <shortName evidence="1">Lip-syn</shortName>
    </alternativeName>
    <alternativeName>
        <fullName evidence="1">Lipoic acid synthase</fullName>
    </alternativeName>
</protein>
<gene>
    <name type="ORF">An11g09760</name>
</gene>
<proteinExistence type="inferred from homology"/>
<dbReference type="EC" id="2.8.1.8" evidence="1"/>
<dbReference type="EMBL" id="AM270251">
    <property type="protein sequence ID" value="CAK97060.1"/>
    <property type="molecule type" value="Genomic_DNA"/>
</dbReference>
<dbReference type="RefSeq" id="XP_001394934.1">
    <property type="nucleotide sequence ID" value="XM_001394897.2"/>
</dbReference>
<dbReference type="SMR" id="A5ABM5"/>
<dbReference type="EnsemblFungi" id="CAK97060">
    <property type="protein sequence ID" value="CAK97060"/>
    <property type="gene ID" value="An11g09760"/>
</dbReference>
<dbReference type="GeneID" id="4985192"/>
<dbReference type="KEGG" id="ang:An11g09760"/>
<dbReference type="VEuPathDB" id="FungiDB:An11g09760"/>
<dbReference type="HOGENOM" id="CLU_033144_2_0_1"/>
<dbReference type="UniPathway" id="UPA00538">
    <property type="reaction ID" value="UER00593"/>
</dbReference>
<dbReference type="Proteomes" id="UP000006706">
    <property type="component" value="Chromosome 7R"/>
</dbReference>
<dbReference type="GO" id="GO:0005739">
    <property type="term" value="C:mitochondrion"/>
    <property type="evidence" value="ECO:0007669"/>
    <property type="project" value="UniProtKB-SubCell"/>
</dbReference>
<dbReference type="GO" id="GO:0051539">
    <property type="term" value="F:4 iron, 4 sulfur cluster binding"/>
    <property type="evidence" value="ECO:0007669"/>
    <property type="project" value="UniProtKB-UniRule"/>
</dbReference>
<dbReference type="GO" id="GO:0016992">
    <property type="term" value="F:lipoate synthase activity"/>
    <property type="evidence" value="ECO:0007669"/>
    <property type="project" value="UniProtKB-UniRule"/>
</dbReference>
<dbReference type="GO" id="GO:0046872">
    <property type="term" value="F:metal ion binding"/>
    <property type="evidence" value="ECO:0007669"/>
    <property type="project" value="UniProtKB-KW"/>
</dbReference>
<dbReference type="CDD" id="cd01335">
    <property type="entry name" value="Radical_SAM"/>
    <property type="match status" value="1"/>
</dbReference>
<dbReference type="FunFam" id="3.20.20.70:FF:000036">
    <property type="entry name" value="Lipoyl synthase, mitochondrial"/>
    <property type="match status" value="1"/>
</dbReference>
<dbReference type="Gene3D" id="3.20.20.70">
    <property type="entry name" value="Aldolase class I"/>
    <property type="match status" value="1"/>
</dbReference>
<dbReference type="HAMAP" id="MF_00206">
    <property type="entry name" value="Lipoyl_synth"/>
    <property type="match status" value="1"/>
</dbReference>
<dbReference type="InterPro" id="IPR013785">
    <property type="entry name" value="Aldolase_TIM"/>
</dbReference>
<dbReference type="InterPro" id="IPR006638">
    <property type="entry name" value="Elp3/MiaA/NifB-like_rSAM"/>
</dbReference>
<dbReference type="InterPro" id="IPR031691">
    <property type="entry name" value="LIAS_N"/>
</dbReference>
<dbReference type="InterPro" id="IPR003698">
    <property type="entry name" value="Lipoyl_synth"/>
</dbReference>
<dbReference type="InterPro" id="IPR007197">
    <property type="entry name" value="rSAM"/>
</dbReference>
<dbReference type="NCBIfam" id="TIGR00510">
    <property type="entry name" value="lipA"/>
    <property type="match status" value="1"/>
</dbReference>
<dbReference type="NCBIfam" id="NF004019">
    <property type="entry name" value="PRK05481.1"/>
    <property type="match status" value="1"/>
</dbReference>
<dbReference type="NCBIfam" id="NF009544">
    <property type="entry name" value="PRK12928.1"/>
    <property type="match status" value="1"/>
</dbReference>
<dbReference type="PANTHER" id="PTHR10949">
    <property type="entry name" value="LIPOYL SYNTHASE"/>
    <property type="match status" value="1"/>
</dbReference>
<dbReference type="PANTHER" id="PTHR10949:SF0">
    <property type="entry name" value="LIPOYL SYNTHASE, MITOCHONDRIAL"/>
    <property type="match status" value="1"/>
</dbReference>
<dbReference type="Pfam" id="PF16881">
    <property type="entry name" value="LIAS_N"/>
    <property type="match status" value="1"/>
</dbReference>
<dbReference type="Pfam" id="PF04055">
    <property type="entry name" value="Radical_SAM"/>
    <property type="match status" value="1"/>
</dbReference>
<dbReference type="SFLD" id="SFLDF00271">
    <property type="entry name" value="lipoyl_synthase"/>
    <property type="match status" value="1"/>
</dbReference>
<dbReference type="SFLD" id="SFLDG01058">
    <property type="entry name" value="lipoyl_synthase_like"/>
    <property type="match status" value="1"/>
</dbReference>
<dbReference type="SMART" id="SM00729">
    <property type="entry name" value="Elp3"/>
    <property type="match status" value="1"/>
</dbReference>
<dbReference type="SUPFAM" id="SSF102114">
    <property type="entry name" value="Radical SAM enzymes"/>
    <property type="match status" value="1"/>
</dbReference>
<dbReference type="PROSITE" id="PS51918">
    <property type="entry name" value="RADICAL_SAM"/>
    <property type="match status" value="1"/>
</dbReference>
<sequence>MAAASTNRLRLLYTSTRASLPQSTPSILTTRTYATTDSSTSATSTPKPRRRTAFTDKLNAGPSFGDFVSGNNDNAPLIDPSEAYALETALVGPAGRKKQMTRLPPWLKTPIPDSKNYQRLKKDLRGLNLHTVCEEARCPNISDCWGGGDKAAATATIMLMGDTCTRGCSFCSVKTSRRPAALDPHEPENTAEAISRWGLGYVVLTSVDRDDLADGGARHFAETVRKIKSKAPSTLVECLTGDYRGDLDMVALVANSGLDVYAHNIETVEALTPRVRDRRATFKQSIAVLEAAKKANPEVITKSSLMLGLGETEEQLEHALAQLRAVDVDVVTFGQYMRPTKRHMAVHEYVHPRWFEHWQRRAEELGFLYCASGPLVRSSYKAGEAFIENVLKKRRAGVSDAVAEKKVAAAVDEAAR</sequence>
<keyword id="KW-0004">4Fe-4S</keyword>
<keyword id="KW-0408">Iron</keyword>
<keyword id="KW-0411">Iron-sulfur</keyword>
<keyword id="KW-0479">Metal-binding</keyword>
<keyword id="KW-0496">Mitochondrion</keyword>
<keyword id="KW-1185">Reference proteome</keyword>
<keyword id="KW-0949">S-adenosyl-L-methionine</keyword>
<keyword id="KW-0808">Transferase</keyword>
<keyword id="KW-0809">Transit peptide</keyword>
<comment type="function">
    <text evidence="1">Catalyzes the radical-mediated insertion of two sulfur atoms into the C-6 and C-8 positions of the octanoyl moiety bound to the lipoyl domains of lipoate-dependent enzymes, thereby converting the octanoylated domains into lipoylated derivatives.</text>
</comment>
<comment type="catalytic activity">
    <reaction evidence="1">
        <text>[[Fe-S] cluster scaffold protein carrying a second [4Fe-4S](2+) cluster] + N(6)-octanoyl-L-lysyl-[protein] + 2 oxidized [2Fe-2S]-[ferredoxin] + 2 S-adenosyl-L-methionine + 4 H(+) = [[Fe-S] cluster scaffold protein] + N(6)-[(R)-dihydrolipoyl]-L-lysyl-[protein] + 4 Fe(3+) + 2 hydrogen sulfide + 2 5'-deoxyadenosine + 2 L-methionine + 2 reduced [2Fe-2S]-[ferredoxin]</text>
        <dbReference type="Rhea" id="RHEA:16585"/>
        <dbReference type="Rhea" id="RHEA-COMP:9928"/>
        <dbReference type="Rhea" id="RHEA-COMP:10000"/>
        <dbReference type="Rhea" id="RHEA-COMP:10001"/>
        <dbReference type="Rhea" id="RHEA-COMP:10475"/>
        <dbReference type="Rhea" id="RHEA-COMP:14568"/>
        <dbReference type="Rhea" id="RHEA-COMP:14569"/>
        <dbReference type="ChEBI" id="CHEBI:15378"/>
        <dbReference type="ChEBI" id="CHEBI:17319"/>
        <dbReference type="ChEBI" id="CHEBI:29034"/>
        <dbReference type="ChEBI" id="CHEBI:29919"/>
        <dbReference type="ChEBI" id="CHEBI:33722"/>
        <dbReference type="ChEBI" id="CHEBI:33737"/>
        <dbReference type="ChEBI" id="CHEBI:33738"/>
        <dbReference type="ChEBI" id="CHEBI:57844"/>
        <dbReference type="ChEBI" id="CHEBI:59789"/>
        <dbReference type="ChEBI" id="CHEBI:78809"/>
        <dbReference type="ChEBI" id="CHEBI:83100"/>
        <dbReference type="EC" id="2.8.1.8"/>
    </reaction>
</comment>
<comment type="cofactor">
    <cofactor evidence="1">
        <name>[4Fe-4S] cluster</name>
        <dbReference type="ChEBI" id="CHEBI:49883"/>
    </cofactor>
    <text evidence="1">Binds 2 [4Fe-4S] clusters per subunit. One cluster is coordinated with 3 cysteines and an exchangeable S-adenosyl-L-methionine.</text>
</comment>
<comment type="pathway">
    <text evidence="1">Protein modification; protein lipoylation via endogenous pathway; protein N(6)-(lipoyl)lysine from octanoyl-[acyl-carrier-protein]: step 2/2.</text>
</comment>
<comment type="subcellular location">
    <subcellularLocation>
        <location evidence="1">Mitochondrion</location>
    </subcellularLocation>
</comment>
<comment type="similarity">
    <text evidence="1">Belongs to the radical SAM superfamily. Lipoyl synthase family.</text>
</comment>
<name>LIPA_ASPNC</name>
<organism>
    <name type="scientific">Aspergillus niger (strain ATCC MYA-4892 / CBS 513.88 / FGSC A1513)</name>
    <dbReference type="NCBI Taxonomy" id="425011"/>
    <lineage>
        <taxon>Eukaryota</taxon>
        <taxon>Fungi</taxon>
        <taxon>Dikarya</taxon>
        <taxon>Ascomycota</taxon>
        <taxon>Pezizomycotina</taxon>
        <taxon>Eurotiomycetes</taxon>
        <taxon>Eurotiomycetidae</taxon>
        <taxon>Eurotiales</taxon>
        <taxon>Aspergillaceae</taxon>
        <taxon>Aspergillus</taxon>
        <taxon>Aspergillus subgen. Circumdati</taxon>
    </lineage>
</organism>